<keyword id="KW-0539">Nucleus</keyword>
<keyword id="KW-1185">Reference proteome</keyword>
<keyword id="KW-0690">Ribosome biogenesis</keyword>
<gene>
    <name type="primary">bysl</name>
    <name type="ORF">17006</name>
</gene>
<name>BYST_MONBE</name>
<evidence type="ECO:0000250" key="1">
    <source>
        <dbReference type="UniProtKB" id="Q13895"/>
    </source>
</evidence>
<evidence type="ECO:0000256" key="2">
    <source>
        <dbReference type="SAM" id="MobiDB-lite"/>
    </source>
</evidence>
<evidence type="ECO:0000305" key="3"/>
<protein>
    <recommendedName>
        <fullName>Bystin</fullName>
    </recommendedName>
</protein>
<accession>A9UNU6</accession>
<reference key="1">
    <citation type="journal article" date="2008" name="Nature">
        <title>The genome of the choanoflagellate Monosiga brevicollis and the origin of metazoans.</title>
        <authorList>
            <consortium name="JGI Sequencing"/>
            <person name="King N."/>
            <person name="Westbrook M.J."/>
            <person name="Young S.L."/>
            <person name="Kuo A."/>
            <person name="Abedin M."/>
            <person name="Chapman J."/>
            <person name="Fairclough S."/>
            <person name="Hellsten U."/>
            <person name="Isogai Y."/>
            <person name="Letunic I."/>
            <person name="Marr M."/>
            <person name="Pincus D."/>
            <person name="Putnam N."/>
            <person name="Rokas A."/>
            <person name="Wright K.J."/>
            <person name="Zuzow R."/>
            <person name="Dirks W."/>
            <person name="Good M."/>
            <person name="Goodstein D."/>
            <person name="Lemons D."/>
            <person name="Li W."/>
            <person name="Lyons J.B."/>
            <person name="Morris A."/>
            <person name="Nichols S."/>
            <person name="Richter D.J."/>
            <person name="Salamov A."/>
            <person name="Bork P."/>
            <person name="Lim W.A."/>
            <person name="Manning G."/>
            <person name="Miller W.T."/>
            <person name="McGinnis W."/>
            <person name="Shapiro H."/>
            <person name="Tjian R."/>
            <person name="Grigoriev I.V."/>
            <person name="Rokhsar D."/>
        </authorList>
    </citation>
    <scope>NUCLEOTIDE SEQUENCE [LARGE SCALE GENOMIC DNA]</scope>
    <source>
        <strain>MX1 / ATCC 50154</strain>
    </source>
</reference>
<sequence length="414" mass="47686">MSAKRNTKLRHAPLEHAYVDDKSVRRNKRSKQRGRMQDDESVDAPLNEKQAQVIARQAQLQQNEEDVSDSEQTGQPVDIDVPSDDEGQADDLAQPEDAYRHFEIDEHDEVALRAFMPAEPAQRRTLADIIMEKIQGKRTEVASQVSQTGPRELNPKVIEVYQGVGQVLSRYRSGKLPKAFKIIPRLKNWEEIVYITEPENWTAASMYAATRLFASNLKEKMAQRFYNLILLPRVRDDIAEYKRLNFHLYQAIKKAIFKPGAFFKGFLLPLCEAGDCTLREAVIIGGILVRKSIPVLHSSAAMLKMAEMPYSGATSIFLRVLLDKKYSLPFRVVDAVVAHFYRFNADHRQLPVLWHQCLLVFVQRYKEDITSEQKRALLDVLRSHNHYAITPEIRRELVQSKSRDREMPLEESSR</sequence>
<feature type="chain" id="PRO_0000327727" description="Bystin">
    <location>
        <begin position="1"/>
        <end position="414"/>
    </location>
</feature>
<feature type="region of interest" description="Disordered" evidence="2">
    <location>
        <begin position="1"/>
        <end position="91"/>
    </location>
</feature>
<feature type="compositionally biased region" description="Basic residues" evidence="2">
    <location>
        <begin position="1"/>
        <end position="11"/>
    </location>
</feature>
<feature type="compositionally biased region" description="Basic and acidic residues" evidence="2">
    <location>
        <begin position="12"/>
        <end position="24"/>
    </location>
</feature>
<feature type="compositionally biased region" description="Basic residues" evidence="2">
    <location>
        <begin position="25"/>
        <end position="34"/>
    </location>
</feature>
<proteinExistence type="inferred from homology"/>
<organism>
    <name type="scientific">Monosiga brevicollis</name>
    <name type="common">Choanoflagellate</name>
    <dbReference type="NCBI Taxonomy" id="81824"/>
    <lineage>
        <taxon>Eukaryota</taxon>
        <taxon>Choanoflagellata</taxon>
        <taxon>Craspedida</taxon>
        <taxon>Salpingoecidae</taxon>
        <taxon>Monosiga</taxon>
    </lineage>
</organism>
<comment type="function">
    <text evidence="1">Required for processing of 20S pre-rRNA precursor and biogenesis of 40S ribosomal subunits.</text>
</comment>
<comment type="subcellular location">
    <subcellularLocation>
        <location evidence="1">Nucleus</location>
        <location evidence="1">Nucleolus</location>
    </subcellularLocation>
</comment>
<comment type="similarity">
    <text evidence="3">Belongs to the bystin family.</text>
</comment>
<dbReference type="EMBL" id="CH991543">
    <property type="protein sequence ID" value="EDQ92305.1"/>
    <property type="molecule type" value="Genomic_DNA"/>
</dbReference>
<dbReference type="RefSeq" id="XP_001742067.1">
    <property type="nucleotide sequence ID" value="XM_001742015.1"/>
</dbReference>
<dbReference type="SMR" id="A9UNU6"/>
<dbReference type="FunCoup" id="A9UNU6">
    <property type="interactions" value="913"/>
</dbReference>
<dbReference type="STRING" id="81824.A9UNU6"/>
<dbReference type="EnsemblProtists" id="EDQ92305">
    <property type="protein sequence ID" value="EDQ92305"/>
    <property type="gene ID" value="MONBRDRAFT_17006"/>
</dbReference>
<dbReference type="KEGG" id="mbr:MONBRDRAFT_17006"/>
<dbReference type="eggNOG" id="KOG3871">
    <property type="taxonomic scope" value="Eukaryota"/>
</dbReference>
<dbReference type="InParanoid" id="A9UNU6"/>
<dbReference type="OMA" id="TKLPVIW"/>
<dbReference type="Proteomes" id="UP000001357">
    <property type="component" value="Unassembled WGS sequence"/>
</dbReference>
<dbReference type="GO" id="GO:0005737">
    <property type="term" value="C:cytoplasm"/>
    <property type="evidence" value="ECO:0000318"/>
    <property type="project" value="GO_Central"/>
</dbReference>
<dbReference type="GO" id="GO:0005730">
    <property type="term" value="C:nucleolus"/>
    <property type="evidence" value="ECO:0000318"/>
    <property type="project" value="GO_Central"/>
</dbReference>
<dbReference type="GO" id="GO:0030688">
    <property type="term" value="C:preribosome, small subunit precursor"/>
    <property type="evidence" value="ECO:0000318"/>
    <property type="project" value="GO_Central"/>
</dbReference>
<dbReference type="GO" id="GO:0030515">
    <property type="term" value="F:snoRNA binding"/>
    <property type="evidence" value="ECO:0000318"/>
    <property type="project" value="GO_Central"/>
</dbReference>
<dbReference type="GO" id="GO:0006364">
    <property type="term" value="P:rRNA processing"/>
    <property type="evidence" value="ECO:0000318"/>
    <property type="project" value="GO_Central"/>
</dbReference>
<dbReference type="InterPro" id="IPR007955">
    <property type="entry name" value="Bystin"/>
</dbReference>
<dbReference type="PANTHER" id="PTHR12821">
    <property type="entry name" value="BYSTIN"/>
    <property type="match status" value="1"/>
</dbReference>
<dbReference type="PANTHER" id="PTHR12821:SF0">
    <property type="entry name" value="BYSTIN"/>
    <property type="match status" value="1"/>
</dbReference>
<dbReference type="Pfam" id="PF05291">
    <property type="entry name" value="Bystin"/>
    <property type="match status" value="1"/>
</dbReference>